<evidence type="ECO:0000255" key="1">
    <source>
        <dbReference type="HAMAP-Rule" id="MF_00377"/>
    </source>
</evidence>
<comment type="function">
    <text evidence="1">Plays an essential role in the initiation and regulation of chromosomal replication. ATP-DnaA binds to the origin of replication (oriC) to initiate formation of the DNA replication initiation complex once per cell cycle. Binds the DnaA box (a 9 base pair repeat at the origin) and separates the double-stranded (ds)DNA. Forms a right-handed helical filament on oriC DNA; dsDNA binds to the exterior of the filament while single-stranded (ss)DNA is stabiized in the filament's interior. The ATP-DnaA-oriC complex binds and stabilizes one strand of the AT-rich DNA unwinding element (DUE), permitting loading of DNA polymerase. After initiation quickly degrades to an ADP-DnaA complex that is not apt for DNA replication. Binds acidic phospholipids.</text>
</comment>
<comment type="subunit">
    <text evidence="1">Oligomerizes as a right-handed, spiral filament on DNA at oriC.</text>
</comment>
<comment type="subcellular location">
    <subcellularLocation>
        <location evidence="1">Cytoplasm</location>
    </subcellularLocation>
</comment>
<comment type="domain">
    <text evidence="1">Domain I is involved in oligomerization and binding regulators, domain II is flexibile and of varying length in different bacteria, domain III forms the AAA+ region, while domain IV binds dsDNA.</text>
</comment>
<comment type="similarity">
    <text evidence="1">Belongs to the DnaA family.</text>
</comment>
<protein>
    <recommendedName>
        <fullName evidence="1">Chromosomal replication initiator protein DnaA</fullName>
    </recommendedName>
</protein>
<keyword id="KW-0067">ATP-binding</keyword>
<keyword id="KW-0963">Cytoplasm</keyword>
<keyword id="KW-0235">DNA replication</keyword>
<keyword id="KW-0238">DNA-binding</keyword>
<keyword id="KW-0446">Lipid-binding</keyword>
<keyword id="KW-0547">Nucleotide-binding</keyword>
<gene>
    <name evidence="1" type="primary">dnaA</name>
    <name type="ordered locus">LJ_0001</name>
</gene>
<reference key="1">
    <citation type="journal article" date="2004" name="Proc. Natl. Acad. Sci. U.S.A.">
        <title>The genome sequence of the probiotic intestinal bacterium Lactobacillus johnsonii NCC 533.</title>
        <authorList>
            <person name="Pridmore R.D."/>
            <person name="Berger B."/>
            <person name="Desiere F."/>
            <person name="Vilanova D."/>
            <person name="Barretto C."/>
            <person name="Pittet A.-C."/>
            <person name="Zwahlen M.-C."/>
            <person name="Rouvet M."/>
            <person name="Altermann E."/>
            <person name="Barrangou R."/>
            <person name="Mollet B."/>
            <person name="Mercenier A."/>
            <person name="Klaenhammer T."/>
            <person name="Arigoni F."/>
            <person name="Schell M.A."/>
        </authorList>
    </citation>
    <scope>NUCLEOTIDE SEQUENCE [LARGE SCALE GENOMIC DNA]</scope>
    <source>
        <strain>CNCM I-1225 / La1 / NCC 533</strain>
    </source>
</reference>
<name>DNAA_LACJO</name>
<proteinExistence type="inferred from homology"/>
<feature type="chain" id="PRO_0000114192" description="Chromosomal replication initiator protein DnaA">
    <location>
        <begin position="1"/>
        <end position="454"/>
    </location>
</feature>
<feature type="region of interest" description="Domain I, interacts with DnaA modulators" evidence="1">
    <location>
        <begin position="1"/>
        <end position="74"/>
    </location>
</feature>
<feature type="region of interest" description="Domain II" evidence="1">
    <location>
        <begin position="74"/>
        <end position="116"/>
    </location>
</feature>
<feature type="region of interest" description="Domain III, AAA+ region" evidence="1">
    <location>
        <begin position="117"/>
        <end position="333"/>
    </location>
</feature>
<feature type="region of interest" description="Domain IV, binds dsDNA" evidence="1">
    <location>
        <begin position="334"/>
        <end position="454"/>
    </location>
</feature>
<feature type="binding site" evidence="1">
    <location>
        <position position="161"/>
    </location>
    <ligand>
        <name>ATP</name>
        <dbReference type="ChEBI" id="CHEBI:30616"/>
    </ligand>
</feature>
<feature type="binding site" evidence="1">
    <location>
        <position position="163"/>
    </location>
    <ligand>
        <name>ATP</name>
        <dbReference type="ChEBI" id="CHEBI:30616"/>
    </ligand>
</feature>
<feature type="binding site" evidence="1">
    <location>
        <position position="164"/>
    </location>
    <ligand>
        <name>ATP</name>
        <dbReference type="ChEBI" id="CHEBI:30616"/>
    </ligand>
</feature>
<feature type="binding site" evidence="1">
    <location>
        <position position="165"/>
    </location>
    <ligand>
        <name>ATP</name>
        <dbReference type="ChEBI" id="CHEBI:30616"/>
    </ligand>
</feature>
<accession>Q74M34</accession>
<dbReference type="EMBL" id="AE017198">
    <property type="protein sequence ID" value="AAS07981.1"/>
    <property type="molecule type" value="Genomic_DNA"/>
</dbReference>
<dbReference type="RefSeq" id="WP_004898273.1">
    <property type="nucleotide sequence ID" value="NC_005362.1"/>
</dbReference>
<dbReference type="SMR" id="Q74M34"/>
<dbReference type="GeneID" id="83569436"/>
<dbReference type="KEGG" id="ljo:LJ_0001"/>
<dbReference type="eggNOG" id="COG0593">
    <property type="taxonomic scope" value="Bacteria"/>
</dbReference>
<dbReference type="HOGENOM" id="CLU_026910_3_1_9"/>
<dbReference type="Proteomes" id="UP000000581">
    <property type="component" value="Chromosome"/>
</dbReference>
<dbReference type="GO" id="GO:0005737">
    <property type="term" value="C:cytoplasm"/>
    <property type="evidence" value="ECO:0007669"/>
    <property type="project" value="UniProtKB-SubCell"/>
</dbReference>
<dbReference type="GO" id="GO:0005886">
    <property type="term" value="C:plasma membrane"/>
    <property type="evidence" value="ECO:0007669"/>
    <property type="project" value="TreeGrafter"/>
</dbReference>
<dbReference type="GO" id="GO:0005524">
    <property type="term" value="F:ATP binding"/>
    <property type="evidence" value="ECO:0007669"/>
    <property type="project" value="UniProtKB-UniRule"/>
</dbReference>
<dbReference type="GO" id="GO:0016887">
    <property type="term" value="F:ATP hydrolysis activity"/>
    <property type="evidence" value="ECO:0007669"/>
    <property type="project" value="InterPro"/>
</dbReference>
<dbReference type="GO" id="GO:0003688">
    <property type="term" value="F:DNA replication origin binding"/>
    <property type="evidence" value="ECO:0007669"/>
    <property type="project" value="UniProtKB-UniRule"/>
</dbReference>
<dbReference type="GO" id="GO:0008289">
    <property type="term" value="F:lipid binding"/>
    <property type="evidence" value="ECO:0007669"/>
    <property type="project" value="UniProtKB-KW"/>
</dbReference>
<dbReference type="GO" id="GO:0006270">
    <property type="term" value="P:DNA replication initiation"/>
    <property type="evidence" value="ECO:0007669"/>
    <property type="project" value="UniProtKB-UniRule"/>
</dbReference>
<dbReference type="GO" id="GO:0006275">
    <property type="term" value="P:regulation of DNA replication"/>
    <property type="evidence" value="ECO:0007669"/>
    <property type="project" value="UniProtKB-UniRule"/>
</dbReference>
<dbReference type="CDD" id="cd00009">
    <property type="entry name" value="AAA"/>
    <property type="match status" value="1"/>
</dbReference>
<dbReference type="CDD" id="cd06571">
    <property type="entry name" value="Bac_DnaA_C"/>
    <property type="match status" value="1"/>
</dbReference>
<dbReference type="FunFam" id="1.10.1750.10:FF:000002">
    <property type="entry name" value="Chromosomal replication initiator protein DnaA"/>
    <property type="match status" value="1"/>
</dbReference>
<dbReference type="FunFam" id="1.10.8.60:FF:000003">
    <property type="entry name" value="Chromosomal replication initiator protein DnaA"/>
    <property type="match status" value="1"/>
</dbReference>
<dbReference type="FunFam" id="3.40.50.300:FF:000668">
    <property type="entry name" value="Chromosomal replication initiator protein DnaA"/>
    <property type="match status" value="1"/>
</dbReference>
<dbReference type="Gene3D" id="1.10.1750.10">
    <property type="match status" value="1"/>
</dbReference>
<dbReference type="Gene3D" id="1.10.8.60">
    <property type="match status" value="1"/>
</dbReference>
<dbReference type="Gene3D" id="3.30.300.180">
    <property type="match status" value="1"/>
</dbReference>
<dbReference type="Gene3D" id="3.40.50.300">
    <property type="entry name" value="P-loop containing nucleotide triphosphate hydrolases"/>
    <property type="match status" value="1"/>
</dbReference>
<dbReference type="HAMAP" id="MF_00377">
    <property type="entry name" value="DnaA_bact"/>
    <property type="match status" value="1"/>
</dbReference>
<dbReference type="InterPro" id="IPR003593">
    <property type="entry name" value="AAA+_ATPase"/>
</dbReference>
<dbReference type="InterPro" id="IPR001957">
    <property type="entry name" value="Chromosome_initiator_DnaA"/>
</dbReference>
<dbReference type="InterPro" id="IPR020591">
    <property type="entry name" value="Chromosome_initiator_DnaA-like"/>
</dbReference>
<dbReference type="InterPro" id="IPR018312">
    <property type="entry name" value="Chromosome_initiator_DnaA_CS"/>
</dbReference>
<dbReference type="InterPro" id="IPR013159">
    <property type="entry name" value="DnaA_C"/>
</dbReference>
<dbReference type="InterPro" id="IPR013317">
    <property type="entry name" value="DnaA_dom"/>
</dbReference>
<dbReference type="InterPro" id="IPR038454">
    <property type="entry name" value="DnaA_N_sf"/>
</dbReference>
<dbReference type="InterPro" id="IPR027417">
    <property type="entry name" value="P-loop_NTPase"/>
</dbReference>
<dbReference type="InterPro" id="IPR010921">
    <property type="entry name" value="Trp_repressor/repl_initiator"/>
</dbReference>
<dbReference type="NCBIfam" id="TIGR00362">
    <property type="entry name" value="DnaA"/>
    <property type="match status" value="1"/>
</dbReference>
<dbReference type="PANTHER" id="PTHR30050">
    <property type="entry name" value="CHROMOSOMAL REPLICATION INITIATOR PROTEIN DNAA"/>
    <property type="match status" value="1"/>
</dbReference>
<dbReference type="PANTHER" id="PTHR30050:SF2">
    <property type="entry name" value="CHROMOSOMAL REPLICATION INITIATOR PROTEIN DNAA"/>
    <property type="match status" value="1"/>
</dbReference>
<dbReference type="Pfam" id="PF00308">
    <property type="entry name" value="Bac_DnaA"/>
    <property type="match status" value="1"/>
</dbReference>
<dbReference type="Pfam" id="PF08299">
    <property type="entry name" value="Bac_DnaA_C"/>
    <property type="match status" value="1"/>
</dbReference>
<dbReference type="PRINTS" id="PR00051">
    <property type="entry name" value="DNAA"/>
</dbReference>
<dbReference type="SMART" id="SM00382">
    <property type="entry name" value="AAA"/>
    <property type="match status" value="1"/>
</dbReference>
<dbReference type="SMART" id="SM00760">
    <property type="entry name" value="Bac_DnaA_C"/>
    <property type="match status" value="1"/>
</dbReference>
<dbReference type="SUPFAM" id="SSF52540">
    <property type="entry name" value="P-loop containing nucleoside triphosphate hydrolases"/>
    <property type="match status" value="1"/>
</dbReference>
<dbReference type="SUPFAM" id="SSF48295">
    <property type="entry name" value="TrpR-like"/>
    <property type="match status" value="1"/>
</dbReference>
<dbReference type="PROSITE" id="PS01008">
    <property type="entry name" value="DNAA"/>
    <property type="match status" value="1"/>
</dbReference>
<organism>
    <name type="scientific">Lactobacillus johnsonii (strain CNCM I-12250 / La1 / NCC 533)</name>
    <dbReference type="NCBI Taxonomy" id="257314"/>
    <lineage>
        <taxon>Bacteria</taxon>
        <taxon>Bacillati</taxon>
        <taxon>Bacillota</taxon>
        <taxon>Bacilli</taxon>
        <taxon>Lactobacillales</taxon>
        <taxon>Lactobacillaceae</taxon>
        <taxon>Lactobacillus</taxon>
    </lineage>
</organism>
<sequence length="454" mass="51656">MFDLDKFWQFFNAEMKKSYSTVAYNAWFKNTKPISFNKKTKEMIIAVESPVAKGYWEKNLASQLIQEAYAYADMEIQPKFEVAGKEGPERLVTPQPRIKTNQEILENRRDEFAQDLQLNSKYTFDTFVQGEGNKLAAGAALAVADNPGSFYNPLFIFGGVGLGKTHLMQAIGHQMLAEKPHAKVVYIQSETFVNDFINSIKNKTQAEFRNKYRNCDLLLVDDIQFFSKKEGIQEEFFHTFETLYNDQKQIVMTSDRLPTEIPELSERLVSRFAWGLQVEITPPDLETRIAILRKKAETDGLAIDDSTLDYIASQVDTNIRELEGALVKVQAHATIEREDINVDLAKEALADLKLVQKNRGLQISKIQEVVANYFQTSTTELKGKKRVKQIVVPRQIAMYLSRELTDSSLPKIGQEFGGKDHTTVMHACDKISRALKTDAEIKAAVYDLKAMLEH</sequence>